<organism>
    <name type="scientific">Escherichia coli (strain ATCC 33849 / DSM 4235 / NCIMB 12045 / K12 / DH1)</name>
    <dbReference type="NCBI Taxonomy" id="536056"/>
    <lineage>
        <taxon>Bacteria</taxon>
        <taxon>Pseudomonadati</taxon>
        <taxon>Pseudomonadota</taxon>
        <taxon>Gammaproteobacteria</taxon>
        <taxon>Enterobacterales</taxon>
        <taxon>Enterobacteriaceae</taxon>
        <taxon>Escherichia</taxon>
    </lineage>
</organism>
<proteinExistence type="inferred from homology"/>
<reference key="1">
    <citation type="submission" date="2009-06" db="EMBL/GenBank/DDBJ databases">
        <title>Complete sequence of Escherichia coli DH1.</title>
        <authorList>
            <consortium name="US DOE Joint Genome Institute"/>
            <person name="Lucas S."/>
            <person name="Copeland A."/>
            <person name="Lapidus A."/>
            <person name="Glavina del Rio T."/>
            <person name="Dalin E."/>
            <person name="Tice H."/>
            <person name="Bruce D."/>
            <person name="Goodwin L."/>
            <person name="Pitluck S."/>
            <person name="Chertkov O."/>
            <person name="Brettin T."/>
            <person name="Detter J.C."/>
            <person name="Han C."/>
            <person name="Larimer F."/>
            <person name="Land M."/>
            <person name="Hauser L."/>
            <person name="Kyrpides N."/>
            <person name="Ovchinnikova G."/>
            <person name="Keasling J.D."/>
        </authorList>
    </citation>
    <scope>NUCLEOTIDE SEQUENCE [LARGE SCALE GENOMIC DNA]</scope>
    <source>
        <strain>ATCC 33849 / DSM 4235 / NCIMB 12045 / K12 / DH1</strain>
    </source>
</reference>
<reference key="2">
    <citation type="journal article" date="2011" name="PLoS ONE">
        <title>Comparison of sequence reads obtained from three next-generation sequencing platforms.</title>
        <authorList>
            <person name="Suzuki S."/>
            <person name="Ono N."/>
            <person name="Furusawa C."/>
            <person name="Ying B.W."/>
            <person name="Yomo T."/>
        </authorList>
    </citation>
    <scope>NUCLEOTIDE SEQUENCE [LARGE SCALE GENOMIC DNA]</scope>
    <source>
        <strain>ATCC 33849 / DSM 4235 / NCIMB 12045 / K12 / DH1</strain>
    </source>
</reference>
<name>RUTD_ECOD1</name>
<keyword id="KW-0378">Hydrolase</keyword>
<sequence>MKLSLSPPPYADAPVVVLISGLGGSGSYWLPQLAVLEQEYQVVCYDQRGTGNNPDTLAEDYSIAQMAAELHQALVAAGIEHYAVVGHALGALVGMQLALDYPASVTVLISVNGWLRINAHTRRCFQVRERLLYSGGAQAWVEAQPLFLYPADWMAARAPRLEAEDALALAHFQGKNNLLRRLNALKRADFSHHADRIRCPVQIICASDDLLVPTACSSELHAALPDSQKMVMPYGGHACNVTDPETFNALLLNGLASLLHHREAAL</sequence>
<evidence type="ECO:0000255" key="1">
    <source>
        <dbReference type="HAMAP-Rule" id="MF_00832"/>
    </source>
</evidence>
<comment type="function">
    <text evidence="1">Involved in pyrimidine catabolism. May facilitate the hydrolysis of carbamate, a reaction that can also occur spontaneously.</text>
</comment>
<comment type="catalytic activity">
    <reaction evidence="1">
        <text>carbamate + 2 H(+) = NH4(+) + CO2</text>
        <dbReference type="Rhea" id="RHEA:15649"/>
        <dbReference type="ChEBI" id="CHEBI:13941"/>
        <dbReference type="ChEBI" id="CHEBI:15378"/>
        <dbReference type="ChEBI" id="CHEBI:16526"/>
        <dbReference type="ChEBI" id="CHEBI:28938"/>
    </reaction>
</comment>
<comment type="similarity">
    <text evidence="1">Belongs to the AB hydrolase superfamily. Hydrolase RutD family.</text>
</comment>
<feature type="chain" id="PRO_0000402937" description="Putative carbamate hydrolase RutD">
    <location>
        <begin position="1"/>
        <end position="266"/>
    </location>
</feature>
<protein>
    <recommendedName>
        <fullName evidence="1">Putative carbamate hydrolase RutD</fullName>
        <ecNumber evidence="1">3.5.1.-</ecNumber>
    </recommendedName>
    <alternativeName>
        <fullName evidence="1">Aminohydrolase</fullName>
    </alternativeName>
</protein>
<gene>
    <name evidence="1" type="primary">rutD</name>
    <name type="ordered locus">EcDH1_2633</name>
    <name type="ordered locus">ECDH1ME8569_0963</name>
</gene>
<dbReference type="EC" id="3.5.1.-" evidence="1"/>
<dbReference type="EMBL" id="CP001637">
    <property type="protein sequence ID" value="ACX40267.1"/>
    <property type="molecule type" value="Genomic_DNA"/>
</dbReference>
<dbReference type="EMBL" id="AP012030">
    <property type="protein sequence ID" value="BAJ42819.1"/>
    <property type="molecule type" value="Genomic_DNA"/>
</dbReference>
<dbReference type="RefSeq" id="WP_000777653.1">
    <property type="nucleotide sequence ID" value="NC_017638.1"/>
</dbReference>
<dbReference type="SMR" id="C9QZ67"/>
<dbReference type="ESTHER" id="ecoli-rutD">
    <property type="family name" value="RutD"/>
</dbReference>
<dbReference type="KEGG" id="edh:EcDH1_2633"/>
<dbReference type="KEGG" id="edj:ECDH1ME8569_0963"/>
<dbReference type="PATRIC" id="fig|536056.19.peg.1020"/>
<dbReference type="HOGENOM" id="CLU_020336_50_1_6"/>
<dbReference type="GO" id="GO:0016811">
    <property type="term" value="F:hydrolase activity, acting on carbon-nitrogen (but not peptide) bonds, in linear amides"/>
    <property type="evidence" value="ECO:0007669"/>
    <property type="project" value="InterPro"/>
</dbReference>
<dbReference type="GO" id="GO:0019740">
    <property type="term" value="P:nitrogen utilization"/>
    <property type="evidence" value="ECO:0007669"/>
    <property type="project" value="UniProtKB-UniRule"/>
</dbReference>
<dbReference type="GO" id="GO:0006212">
    <property type="term" value="P:uracil catabolic process"/>
    <property type="evidence" value="ECO:0007669"/>
    <property type="project" value="UniProtKB-UniRule"/>
</dbReference>
<dbReference type="FunFam" id="3.40.50.1820:FF:000052">
    <property type="entry name" value="Putative aminoacrylate hydrolase RutD"/>
    <property type="match status" value="1"/>
</dbReference>
<dbReference type="Gene3D" id="3.40.50.1820">
    <property type="entry name" value="alpha/beta hydrolase"/>
    <property type="match status" value="1"/>
</dbReference>
<dbReference type="HAMAP" id="MF_00832">
    <property type="entry name" value="RutD"/>
    <property type="match status" value="1"/>
</dbReference>
<dbReference type="InterPro" id="IPR000073">
    <property type="entry name" value="AB_hydrolase_1"/>
</dbReference>
<dbReference type="InterPro" id="IPR029058">
    <property type="entry name" value="AB_hydrolase_fold"/>
</dbReference>
<dbReference type="InterPro" id="IPR050266">
    <property type="entry name" value="AB_hydrolase_sf"/>
</dbReference>
<dbReference type="InterPro" id="IPR019913">
    <property type="entry name" value="Pyrimidine_utilisation_RutD"/>
</dbReference>
<dbReference type="NCBIfam" id="TIGR03611">
    <property type="entry name" value="RutD"/>
    <property type="match status" value="1"/>
</dbReference>
<dbReference type="PANTHER" id="PTHR43798">
    <property type="entry name" value="MONOACYLGLYCEROL LIPASE"/>
    <property type="match status" value="1"/>
</dbReference>
<dbReference type="Pfam" id="PF00561">
    <property type="entry name" value="Abhydrolase_1"/>
    <property type="match status" value="1"/>
</dbReference>
<dbReference type="PRINTS" id="PR00111">
    <property type="entry name" value="ABHYDROLASE"/>
</dbReference>
<dbReference type="SUPFAM" id="SSF53474">
    <property type="entry name" value="alpha/beta-Hydrolases"/>
    <property type="match status" value="1"/>
</dbReference>
<accession>C9QZ67</accession>
<accession>E6P338</accession>